<proteinExistence type="inferred from homology"/>
<dbReference type="EMBL" id="CP000612">
    <property type="protein sequence ID" value="ABO48771.1"/>
    <property type="molecule type" value="Genomic_DNA"/>
</dbReference>
<dbReference type="RefSeq" id="WP_011876611.1">
    <property type="nucleotide sequence ID" value="NC_009253.1"/>
</dbReference>
<dbReference type="SMR" id="A4J118"/>
<dbReference type="STRING" id="349161.Dred_0222"/>
<dbReference type="KEGG" id="drm:Dred_0222"/>
<dbReference type="eggNOG" id="COG0197">
    <property type="taxonomic scope" value="Bacteria"/>
</dbReference>
<dbReference type="HOGENOM" id="CLU_078858_2_1_9"/>
<dbReference type="OrthoDB" id="9802589at2"/>
<dbReference type="Proteomes" id="UP000001556">
    <property type="component" value="Chromosome"/>
</dbReference>
<dbReference type="GO" id="GO:0022625">
    <property type="term" value="C:cytosolic large ribosomal subunit"/>
    <property type="evidence" value="ECO:0007669"/>
    <property type="project" value="TreeGrafter"/>
</dbReference>
<dbReference type="GO" id="GO:0019843">
    <property type="term" value="F:rRNA binding"/>
    <property type="evidence" value="ECO:0007669"/>
    <property type="project" value="UniProtKB-UniRule"/>
</dbReference>
<dbReference type="GO" id="GO:0003735">
    <property type="term" value="F:structural constituent of ribosome"/>
    <property type="evidence" value="ECO:0007669"/>
    <property type="project" value="InterPro"/>
</dbReference>
<dbReference type="GO" id="GO:0000049">
    <property type="term" value="F:tRNA binding"/>
    <property type="evidence" value="ECO:0007669"/>
    <property type="project" value="UniProtKB-KW"/>
</dbReference>
<dbReference type="GO" id="GO:0006412">
    <property type="term" value="P:translation"/>
    <property type="evidence" value="ECO:0007669"/>
    <property type="project" value="UniProtKB-UniRule"/>
</dbReference>
<dbReference type="CDD" id="cd01433">
    <property type="entry name" value="Ribosomal_L16_L10e"/>
    <property type="match status" value="1"/>
</dbReference>
<dbReference type="FunFam" id="3.90.1170.10:FF:000001">
    <property type="entry name" value="50S ribosomal protein L16"/>
    <property type="match status" value="1"/>
</dbReference>
<dbReference type="Gene3D" id="3.90.1170.10">
    <property type="entry name" value="Ribosomal protein L10e/L16"/>
    <property type="match status" value="1"/>
</dbReference>
<dbReference type="HAMAP" id="MF_01342">
    <property type="entry name" value="Ribosomal_uL16"/>
    <property type="match status" value="1"/>
</dbReference>
<dbReference type="InterPro" id="IPR047873">
    <property type="entry name" value="Ribosomal_uL16"/>
</dbReference>
<dbReference type="InterPro" id="IPR000114">
    <property type="entry name" value="Ribosomal_uL16_bact-type"/>
</dbReference>
<dbReference type="InterPro" id="IPR020798">
    <property type="entry name" value="Ribosomal_uL16_CS"/>
</dbReference>
<dbReference type="InterPro" id="IPR016180">
    <property type="entry name" value="Ribosomal_uL16_dom"/>
</dbReference>
<dbReference type="InterPro" id="IPR036920">
    <property type="entry name" value="Ribosomal_uL16_sf"/>
</dbReference>
<dbReference type="NCBIfam" id="TIGR01164">
    <property type="entry name" value="rplP_bact"/>
    <property type="match status" value="1"/>
</dbReference>
<dbReference type="PANTHER" id="PTHR12220">
    <property type="entry name" value="50S/60S RIBOSOMAL PROTEIN L16"/>
    <property type="match status" value="1"/>
</dbReference>
<dbReference type="PANTHER" id="PTHR12220:SF13">
    <property type="entry name" value="LARGE RIBOSOMAL SUBUNIT PROTEIN UL16M"/>
    <property type="match status" value="1"/>
</dbReference>
<dbReference type="Pfam" id="PF00252">
    <property type="entry name" value="Ribosomal_L16"/>
    <property type="match status" value="1"/>
</dbReference>
<dbReference type="PRINTS" id="PR00060">
    <property type="entry name" value="RIBOSOMALL16"/>
</dbReference>
<dbReference type="SUPFAM" id="SSF54686">
    <property type="entry name" value="Ribosomal protein L16p/L10e"/>
    <property type="match status" value="1"/>
</dbReference>
<dbReference type="PROSITE" id="PS00586">
    <property type="entry name" value="RIBOSOMAL_L16_1"/>
    <property type="match status" value="1"/>
</dbReference>
<dbReference type="PROSITE" id="PS00701">
    <property type="entry name" value="RIBOSOMAL_L16_2"/>
    <property type="match status" value="1"/>
</dbReference>
<accession>A4J118</accession>
<evidence type="ECO:0000255" key="1">
    <source>
        <dbReference type="HAMAP-Rule" id="MF_01342"/>
    </source>
</evidence>
<evidence type="ECO:0000256" key="2">
    <source>
        <dbReference type="SAM" id="MobiDB-lite"/>
    </source>
</evidence>
<evidence type="ECO:0000305" key="3"/>
<sequence>MLIPKRVKYRKQHRPRGNGGVSKGGREVSFGEYGIQALEAGWITNRQIEAARIAMTRYIKRGGKVWIRIFPDKPITQKPAETRMGSGKGAPEHWVAVVKPGRVMFEVAGVPEATAREAMRLAMHKLPVKCKFVVRGEVGEANES</sequence>
<keyword id="KW-1185">Reference proteome</keyword>
<keyword id="KW-0687">Ribonucleoprotein</keyword>
<keyword id="KW-0689">Ribosomal protein</keyword>
<keyword id="KW-0694">RNA-binding</keyword>
<keyword id="KW-0699">rRNA-binding</keyword>
<keyword id="KW-0820">tRNA-binding</keyword>
<protein>
    <recommendedName>
        <fullName evidence="1">Large ribosomal subunit protein uL16</fullName>
    </recommendedName>
    <alternativeName>
        <fullName evidence="3">50S ribosomal protein L16</fullName>
    </alternativeName>
</protein>
<comment type="function">
    <text evidence="1">Binds 23S rRNA and is also seen to make contacts with the A and possibly P site tRNAs.</text>
</comment>
<comment type="subunit">
    <text evidence="1">Part of the 50S ribosomal subunit.</text>
</comment>
<comment type="similarity">
    <text evidence="1">Belongs to the universal ribosomal protein uL16 family.</text>
</comment>
<feature type="chain" id="PRO_1000073325" description="Large ribosomal subunit protein uL16">
    <location>
        <begin position="1"/>
        <end position="144"/>
    </location>
</feature>
<feature type="region of interest" description="Disordered" evidence="2">
    <location>
        <begin position="1"/>
        <end position="25"/>
    </location>
</feature>
<feature type="compositionally biased region" description="Basic residues" evidence="2">
    <location>
        <begin position="1"/>
        <end position="16"/>
    </location>
</feature>
<gene>
    <name evidence="1" type="primary">rplP</name>
    <name type="ordered locus">Dred_0222</name>
</gene>
<name>RL16_DESRM</name>
<reference key="1">
    <citation type="submission" date="2007-03" db="EMBL/GenBank/DDBJ databases">
        <title>Complete sequence of Desulfotomaculum reducens MI-1.</title>
        <authorList>
            <consortium name="US DOE Joint Genome Institute"/>
            <person name="Copeland A."/>
            <person name="Lucas S."/>
            <person name="Lapidus A."/>
            <person name="Barry K."/>
            <person name="Detter J.C."/>
            <person name="Glavina del Rio T."/>
            <person name="Hammon N."/>
            <person name="Israni S."/>
            <person name="Dalin E."/>
            <person name="Tice H."/>
            <person name="Pitluck S."/>
            <person name="Sims D."/>
            <person name="Brettin T."/>
            <person name="Bruce D."/>
            <person name="Han C."/>
            <person name="Tapia R."/>
            <person name="Schmutz J."/>
            <person name="Larimer F."/>
            <person name="Land M."/>
            <person name="Hauser L."/>
            <person name="Kyrpides N."/>
            <person name="Kim E."/>
            <person name="Tebo B.M."/>
            <person name="Richardson P."/>
        </authorList>
    </citation>
    <scope>NUCLEOTIDE SEQUENCE [LARGE SCALE GENOMIC DNA]</scope>
    <source>
        <strain>ATCC BAA-1160 / DSM 100696 / MI-1</strain>
    </source>
</reference>
<organism>
    <name type="scientific">Desulforamulus reducens (strain ATCC BAA-1160 / DSM 100696 / MI-1)</name>
    <name type="common">Desulfotomaculum reducens</name>
    <dbReference type="NCBI Taxonomy" id="349161"/>
    <lineage>
        <taxon>Bacteria</taxon>
        <taxon>Bacillati</taxon>
        <taxon>Bacillota</taxon>
        <taxon>Clostridia</taxon>
        <taxon>Eubacteriales</taxon>
        <taxon>Peptococcaceae</taxon>
        <taxon>Desulforamulus</taxon>
    </lineage>
</organism>